<proteinExistence type="inferred from homology"/>
<sequence length="397" mass="43916">MKAVGLVTEYNPFHNGHIYHIQQAKAVTGADVVIAVMSGNFVQRGEPALFDKWTRTQAALANGVDLVIELPTFYAVQPSHLFAEGAIKLLTALGVEDVVFGSEHATVDFLNLAKQAPSVQGGKAFQEKNQTFAQAYATQLESETGFKLEDPNDILAFGYAKAILNLNSPIKLHAIQRVAAGYHDQSFTDDQTIASASSIRLALHKGKLEKVKGVVPNQTLVDISSANHTVDFESQFWPLLKYRLMTDTIGQLGQVYQMAEGLEHRLAAVALGEPGPQSYQSFIKAVKSKRYTFARIQRTLLYTLLNVKVDQMQAAMQDPYLRILGFTDKGQAYLNGAKKTTTLPLISKVDQHLAKANLRLDFKAGKLWQLLAREPGQQQDIARQPIHFTQAHTKEDK</sequence>
<name>TMCAL_LEUCK</name>
<reference key="1">
    <citation type="journal article" date="2008" name="J. Bacteriol.">
        <title>Complete genome sequence of Leuconostoc citreum KM20.</title>
        <authorList>
            <person name="Kim J.F."/>
            <person name="Jeong H."/>
            <person name="Lee J.-S."/>
            <person name="Choi S.-H."/>
            <person name="Ha M."/>
            <person name="Hur C.-G."/>
            <person name="Kim J.-S."/>
            <person name="Lee S."/>
            <person name="Park H.-S."/>
            <person name="Park Y.-H."/>
            <person name="Oh T.K."/>
        </authorList>
    </citation>
    <scope>NUCLEOTIDE SEQUENCE [LARGE SCALE GENOMIC DNA]</scope>
    <source>
        <strain>KM20</strain>
    </source>
</reference>
<accession>B1MXI0</accession>
<protein>
    <recommendedName>
        <fullName evidence="1">tRNA(Met) cytidine acetate ligase</fullName>
        <ecNumber evidence="1">6.3.4.-</ecNumber>
    </recommendedName>
</protein>
<feature type="chain" id="PRO_1000198857" description="tRNA(Met) cytidine acetate ligase">
    <location>
        <begin position="1"/>
        <end position="397"/>
    </location>
</feature>
<feature type="binding site" evidence="1">
    <location>
        <begin position="7"/>
        <end position="20"/>
    </location>
    <ligand>
        <name>ATP</name>
        <dbReference type="ChEBI" id="CHEBI:30616"/>
    </ligand>
</feature>
<feature type="binding site" evidence="1">
    <location>
        <position position="101"/>
    </location>
    <ligand>
        <name>ATP</name>
        <dbReference type="ChEBI" id="CHEBI:30616"/>
    </ligand>
</feature>
<feature type="binding site" evidence="1">
    <location>
        <position position="152"/>
    </location>
    <ligand>
        <name>ATP</name>
        <dbReference type="ChEBI" id="CHEBI:30616"/>
    </ligand>
</feature>
<feature type="binding site" evidence="1">
    <location>
        <position position="177"/>
    </location>
    <ligand>
        <name>ATP</name>
        <dbReference type="ChEBI" id="CHEBI:30616"/>
    </ligand>
</feature>
<dbReference type="EC" id="6.3.4.-" evidence="1"/>
<dbReference type="EMBL" id="DQ489736">
    <property type="protein sequence ID" value="ACA82232.1"/>
    <property type="molecule type" value="Genomic_DNA"/>
</dbReference>
<dbReference type="RefSeq" id="WP_004905144.1">
    <property type="nucleotide sequence ID" value="NC_010471.1"/>
</dbReference>
<dbReference type="SMR" id="B1MXI0"/>
<dbReference type="STRING" id="349519.LCK_00399"/>
<dbReference type="KEGG" id="lci:LCK_00399"/>
<dbReference type="eggNOG" id="COG1323">
    <property type="taxonomic scope" value="Bacteria"/>
</dbReference>
<dbReference type="HOGENOM" id="CLU_038915_0_2_9"/>
<dbReference type="OrthoDB" id="9769796at2"/>
<dbReference type="Proteomes" id="UP000002166">
    <property type="component" value="Chromosome"/>
</dbReference>
<dbReference type="GO" id="GO:0005737">
    <property type="term" value="C:cytoplasm"/>
    <property type="evidence" value="ECO:0007669"/>
    <property type="project" value="UniProtKB-SubCell"/>
</dbReference>
<dbReference type="GO" id="GO:0005524">
    <property type="term" value="F:ATP binding"/>
    <property type="evidence" value="ECO:0007669"/>
    <property type="project" value="UniProtKB-KW"/>
</dbReference>
<dbReference type="GO" id="GO:0016879">
    <property type="term" value="F:ligase activity, forming carbon-nitrogen bonds"/>
    <property type="evidence" value="ECO:0007669"/>
    <property type="project" value="UniProtKB-UniRule"/>
</dbReference>
<dbReference type="GO" id="GO:0000049">
    <property type="term" value="F:tRNA binding"/>
    <property type="evidence" value="ECO:0007669"/>
    <property type="project" value="UniProtKB-KW"/>
</dbReference>
<dbReference type="GO" id="GO:0006400">
    <property type="term" value="P:tRNA modification"/>
    <property type="evidence" value="ECO:0007669"/>
    <property type="project" value="UniProtKB-UniRule"/>
</dbReference>
<dbReference type="Gene3D" id="3.40.50.620">
    <property type="entry name" value="HUPs"/>
    <property type="match status" value="1"/>
</dbReference>
<dbReference type="HAMAP" id="MF_01539">
    <property type="entry name" value="TmcAL"/>
    <property type="match status" value="1"/>
</dbReference>
<dbReference type="InterPro" id="IPR014729">
    <property type="entry name" value="Rossmann-like_a/b/a_fold"/>
</dbReference>
<dbReference type="InterPro" id="IPR008513">
    <property type="entry name" value="tRNA(Met)_cyd_acetate_ligase"/>
</dbReference>
<dbReference type="NCBIfam" id="NF010191">
    <property type="entry name" value="PRK13670.1"/>
    <property type="match status" value="1"/>
</dbReference>
<dbReference type="PANTHER" id="PTHR37825">
    <property type="entry name" value="TRNA(MET) CYTIDINE ACETATE LIGASE"/>
    <property type="match status" value="1"/>
</dbReference>
<dbReference type="PANTHER" id="PTHR37825:SF1">
    <property type="entry name" value="TRNA(MET) CYTIDINE ACETATE LIGASE"/>
    <property type="match status" value="1"/>
</dbReference>
<dbReference type="Pfam" id="PF05636">
    <property type="entry name" value="HIGH_NTase1"/>
    <property type="match status" value="1"/>
</dbReference>
<dbReference type="SUPFAM" id="SSF52374">
    <property type="entry name" value="Nucleotidylyl transferase"/>
    <property type="match status" value="1"/>
</dbReference>
<evidence type="ECO:0000255" key="1">
    <source>
        <dbReference type="HAMAP-Rule" id="MF_01539"/>
    </source>
</evidence>
<organism>
    <name type="scientific">Leuconostoc citreum (strain KM20)</name>
    <dbReference type="NCBI Taxonomy" id="349519"/>
    <lineage>
        <taxon>Bacteria</taxon>
        <taxon>Bacillati</taxon>
        <taxon>Bacillota</taxon>
        <taxon>Bacilli</taxon>
        <taxon>Lactobacillales</taxon>
        <taxon>Lactobacillaceae</taxon>
        <taxon>Leuconostoc</taxon>
    </lineage>
</organism>
<comment type="function">
    <text evidence="1">Catalyzes the formation of N(4)-acetylcytidine (ac(4)C) at the wobble position of elongator tRNA(Met), using acetate and ATP as substrates. First activates an acetate ion to form acetyladenylate (Ac-AMP) and then transfers the acetyl group to tRNA to form ac(4)C34.</text>
</comment>
<comment type="catalytic activity">
    <reaction evidence="1">
        <text>cytidine(34) in elongator tRNA(Met) + acetate + ATP = N(4)-acetylcytidine(34) in elongator tRNA(Met) + AMP + diphosphate</text>
        <dbReference type="Rhea" id="RHEA:58144"/>
        <dbReference type="Rhea" id="RHEA-COMP:10693"/>
        <dbReference type="Rhea" id="RHEA-COMP:10694"/>
        <dbReference type="ChEBI" id="CHEBI:30089"/>
        <dbReference type="ChEBI" id="CHEBI:30616"/>
        <dbReference type="ChEBI" id="CHEBI:33019"/>
        <dbReference type="ChEBI" id="CHEBI:74900"/>
        <dbReference type="ChEBI" id="CHEBI:82748"/>
        <dbReference type="ChEBI" id="CHEBI:456215"/>
    </reaction>
</comment>
<comment type="subcellular location">
    <subcellularLocation>
        <location evidence="1">Cytoplasm</location>
    </subcellularLocation>
</comment>
<comment type="similarity">
    <text evidence="1">Belongs to the TmcAL family.</text>
</comment>
<gene>
    <name evidence="1" type="primary">tmcAL</name>
    <name type="ordered locus">LCK_00399</name>
</gene>
<keyword id="KW-0067">ATP-binding</keyword>
<keyword id="KW-0963">Cytoplasm</keyword>
<keyword id="KW-0436">Ligase</keyword>
<keyword id="KW-0547">Nucleotide-binding</keyword>
<keyword id="KW-1185">Reference proteome</keyword>
<keyword id="KW-0694">RNA-binding</keyword>
<keyword id="KW-0819">tRNA processing</keyword>
<keyword id="KW-0820">tRNA-binding</keyword>